<keyword id="KW-0030">Aminoacyl-tRNA synthetase</keyword>
<keyword id="KW-0067">ATP-binding</keyword>
<keyword id="KW-0963">Cytoplasm</keyword>
<keyword id="KW-0436">Ligase</keyword>
<keyword id="KW-0547">Nucleotide-binding</keyword>
<keyword id="KW-0648">Protein biosynthesis</keyword>
<keyword id="KW-1185">Reference proteome</keyword>
<protein>
    <recommendedName>
        <fullName evidence="1">Proline--tRNA ligase</fullName>
        <ecNumber evidence="1">6.1.1.15</ecNumber>
    </recommendedName>
    <alternativeName>
        <fullName evidence="1">Prolyl-tRNA synthetase</fullName>
        <shortName evidence="1">ProRS</shortName>
    </alternativeName>
</protein>
<reference key="1">
    <citation type="journal article" date="2007" name="J. Bacteriol.">
        <title>Genome of the opportunistic pathogen Streptococcus sanguinis.</title>
        <authorList>
            <person name="Xu P."/>
            <person name="Alves J.M."/>
            <person name="Kitten T."/>
            <person name="Brown A."/>
            <person name="Chen Z."/>
            <person name="Ozaki L.S."/>
            <person name="Manque P."/>
            <person name="Ge X."/>
            <person name="Serrano M.G."/>
            <person name="Puiu D."/>
            <person name="Hendricks S."/>
            <person name="Wang Y."/>
            <person name="Chaplin M.D."/>
            <person name="Akan D."/>
            <person name="Paik S."/>
            <person name="Peterson D.L."/>
            <person name="Macrina F.L."/>
            <person name="Buck G.A."/>
        </authorList>
    </citation>
    <scope>NUCLEOTIDE SEQUENCE [LARGE SCALE GENOMIC DNA]</scope>
    <source>
        <strain>SK36</strain>
    </source>
</reference>
<sequence length="616" mass="68571">MKQSKMLIPTLREMPSDAQVISHALMLRAGYVRQVSAGVYSYLPLANRVIEKAKRIMREEFDKIGAVEMLAPALLSADLWRESGRYETYGEDLYKLKNREKSDFILGPTHEETFTAIVRDSVKSYKQLPLNLYQIQPKYRDEKRPRNGLLRTREFIMKDAYSFHANYDSLDVAYDEYKSAYEKIFTRSELDFKAIIGDGGAMGGKDSQEFMAITPDRTDLNRWVVLDKSVASFDEIPEDVQEAIRTELTSWMVSGEDTIAYSSESSYAANLEMATDEYKPAGRVVTEEEVARVSTPDCKTIDEVAAFLGLDESQTIKTLVYMADESPVVALLVGNDQLNEVKLKNHLAADFFDVASEDQVRQLLGAGFGSLGPVNLPEGVRIIADRKVQDLANAVVGANEDGYHLTGVNPGRDFTAEFVDIREVREGEISPDGQGVLKFARGIEIGHIFKLGTRYSDSMNANVLDENGRAVPMIMGCYGIGVSRLLSAVMEQHARLFVNKTPKGEFRYAWGINFPKELAPFDVHLIPVNVKDEEALALTDQIEANLLSAGYEVLVDDRNERAGVKFSDSDLIGLPIRVTVGKKAAEGIVEVKIKATGDTIEVHADNLLETLSILTK</sequence>
<comment type="function">
    <text evidence="1">Catalyzes the attachment of proline to tRNA(Pro) in a two-step reaction: proline is first activated by ATP to form Pro-AMP and then transferred to the acceptor end of tRNA(Pro). As ProRS can inadvertently accommodate and process non-cognate amino acids such as alanine and cysteine, to avoid such errors it has two additional distinct editing activities against alanine. One activity is designated as 'pretransfer' editing and involves the tRNA(Pro)-independent hydrolysis of activated Ala-AMP. The other activity is designated 'posttransfer' editing and involves deacylation of mischarged Ala-tRNA(Pro). The misacylated Cys-tRNA(Pro) is not edited by ProRS.</text>
</comment>
<comment type="catalytic activity">
    <reaction evidence="1">
        <text>tRNA(Pro) + L-proline + ATP = L-prolyl-tRNA(Pro) + AMP + diphosphate</text>
        <dbReference type="Rhea" id="RHEA:14305"/>
        <dbReference type="Rhea" id="RHEA-COMP:9700"/>
        <dbReference type="Rhea" id="RHEA-COMP:9702"/>
        <dbReference type="ChEBI" id="CHEBI:30616"/>
        <dbReference type="ChEBI" id="CHEBI:33019"/>
        <dbReference type="ChEBI" id="CHEBI:60039"/>
        <dbReference type="ChEBI" id="CHEBI:78442"/>
        <dbReference type="ChEBI" id="CHEBI:78532"/>
        <dbReference type="ChEBI" id="CHEBI:456215"/>
        <dbReference type="EC" id="6.1.1.15"/>
    </reaction>
</comment>
<comment type="subunit">
    <text evidence="1">Homodimer.</text>
</comment>
<comment type="subcellular location">
    <subcellularLocation>
        <location evidence="1">Cytoplasm</location>
    </subcellularLocation>
</comment>
<comment type="domain">
    <text evidence="1">Consists of three domains: the N-terminal catalytic domain, the editing domain and the C-terminal anticodon-binding domain.</text>
</comment>
<comment type="similarity">
    <text evidence="1">Belongs to the class-II aminoacyl-tRNA synthetase family. ProS type 1 subfamily.</text>
</comment>
<feature type="chain" id="PRO_0000288383" description="Proline--tRNA ligase">
    <location>
        <begin position="1"/>
        <end position="616"/>
    </location>
</feature>
<proteinExistence type="inferred from homology"/>
<gene>
    <name evidence="1" type="primary">proS</name>
    <name type="ordered locus">SSA_2069</name>
</gene>
<accession>A3CQI5</accession>
<dbReference type="EC" id="6.1.1.15" evidence="1"/>
<dbReference type="EMBL" id="CP000387">
    <property type="protein sequence ID" value="ABN45440.1"/>
    <property type="molecule type" value="Genomic_DNA"/>
</dbReference>
<dbReference type="RefSeq" id="WP_011837531.1">
    <property type="nucleotide sequence ID" value="NC_009009.1"/>
</dbReference>
<dbReference type="RefSeq" id="YP_001035990.1">
    <property type="nucleotide sequence ID" value="NC_009009.1"/>
</dbReference>
<dbReference type="SMR" id="A3CQI5"/>
<dbReference type="STRING" id="388919.SSA_2069"/>
<dbReference type="KEGG" id="ssa:SSA_2069"/>
<dbReference type="PATRIC" id="fig|388919.9.peg.1962"/>
<dbReference type="eggNOG" id="COG0442">
    <property type="taxonomic scope" value="Bacteria"/>
</dbReference>
<dbReference type="HOGENOM" id="CLU_016739_0_0_9"/>
<dbReference type="OrthoDB" id="9809052at2"/>
<dbReference type="Proteomes" id="UP000002148">
    <property type="component" value="Chromosome"/>
</dbReference>
<dbReference type="GO" id="GO:0005829">
    <property type="term" value="C:cytosol"/>
    <property type="evidence" value="ECO:0007669"/>
    <property type="project" value="TreeGrafter"/>
</dbReference>
<dbReference type="GO" id="GO:0002161">
    <property type="term" value="F:aminoacyl-tRNA deacylase activity"/>
    <property type="evidence" value="ECO:0007669"/>
    <property type="project" value="InterPro"/>
</dbReference>
<dbReference type="GO" id="GO:0005524">
    <property type="term" value="F:ATP binding"/>
    <property type="evidence" value="ECO:0007669"/>
    <property type="project" value="UniProtKB-UniRule"/>
</dbReference>
<dbReference type="GO" id="GO:0140096">
    <property type="term" value="F:catalytic activity, acting on a protein"/>
    <property type="evidence" value="ECO:0007669"/>
    <property type="project" value="UniProtKB-ARBA"/>
</dbReference>
<dbReference type="GO" id="GO:0004827">
    <property type="term" value="F:proline-tRNA ligase activity"/>
    <property type="evidence" value="ECO:0007669"/>
    <property type="project" value="UniProtKB-UniRule"/>
</dbReference>
<dbReference type="GO" id="GO:0016740">
    <property type="term" value="F:transferase activity"/>
    <property type="evidence" value="ECO:0007669"/>
    <property type="project" value="UniProtKB-ARBA"/>
</dbReference>
<dbReference type="GO" id="GO:0006433">
    <property type="term" value="P:prolyl-tRNA aminoacylation"/>
    <property type="evidence" value="ECO:0007669"/>
    <property type="project" value="UniProtKB-UniRule"/>
</dbReference>
<dbReference type="CDD" id="cd04334">
    <property type="entry name" value="ProRS-INS"/>
    <property type="match status" value="1"/>
</dbReference>
<dbReference type="CDD" id="cd00861">
    <property type="entry name" value="ProRS_anticodon_short"/>
    <property type="match status" value="1"/>
</dbReference>
<dbReference type="CDD" id="cd00779">
    <property type="entry name" value="ProRS_core_prok"/>
    <property type="match status" value="1"/>
</dbReference>
<dbReference type="FunFam" id="3.30.930.10:FF:000062">
    <property type="entry name" value="Proline--tRNA ligase"/>
    <property type="match status" value="1"/>
</dbReference>
<dbReference type="FunFam" id="3.30.930.10:FF:000070">
    <property type="entry name" value="Proline--tRNA ligase"/>
    <property type="match status" value="1"/>
</dbReference>
<dbReference type="FunFam" id="3.40.50.800:FF:000011">
    <property type="entry name" value="Proline--tRNA ligase"/>
    <property type="match status" value="1"/>
</dbReference>
<dbReference type="Gene3D" id="3.40.50.800">
    <property type="entry name" value="Anticodon-binding domain"/>
    <property type="match status" value="1"/>
</dbReference>
<dbReference type="Gene3D" id="3.30.930.10">
    <property type="entry name" value="Bira Bifunctional Protein, Domain 2"/>
    <property type="match status" value="2"/>
</dbReference>
<dbReference type="Gene3D" id="3.90.960.10">
    <property type="entry name" value="YbaK/aminoacyl-tRNA synthetase-associated domain"/>
    <property type="match status" value="1"/>
</dbReference>
<dbReference type="HAMAP" id="MF_01569">
    <property type="entry name" value="Pro_tRNA_synth_type1"/>
    <property type="match status" value="1"/>
</dbReference>
<dbReference type="InterPro" id="IPR002314">
    <property type="entry name" value="aa-tRNA-synt_IIb"/>
</dbReference>
<dbReference type="InterPro" id="IPR006195">
    <property type="entry name" value="aa-tRNA-synth_II"/>
</dbReference>
<dbReference type="InterPro" id="IPR045864">
    <property type="entry name" value="aa-tRNA-synth_II/BPL/LPL"/>
</dbReference>
<dbReference type="InterPro" id="IPR004154">
    <property type="entry name" value="Anticodon-bd"/>
</dbReference>
<dbReference type="InterPro" id="IPR036621">
    <property type="entry name" value="Anticodon-bd_dom_sf"/>
</dbReference>
<dbReference type="InterPro" id="IPR002316">
    <property type="entry name" value="Pro-tRNA-ligase_IIa"/>
</dbReference>
<dbReference type="InterPro" id="IPR004500">
    <property type="entry name" value="Pro-tRNA-synth_IIa_bac-type"/>
</dbReference>
<dbReference type="InterPro" id="IPR023717">
    <property type="entry name" value="Pro-tRNA-Synthase_IIa_type1"/>
</dbReference>
<dbReference type="InterPro" id="IPR050062">
    <property type="entry name" value="Pro-tRNA_synthetase"/>
</dbReference>
<dbReference type="InterPro" id="IPR044140">
    <property type="entry name" value="ProRS_anticodon_short"/>
</dbReference>
<dbReference type="InterPro" id="IPR033730">
    <property type="entry name" value="ProRS_core_prok"/>
</dbReference>
<dbReference type="InterPro" id="IPR036754">
    <property type="entry name" value="YbaK/aa-tRNA-synt-asso_dom_sf"/>
</dbReference>
<dbReference type="InterPro" id="IPR007214">
    <property type="entry name" value="YbaK/aa-tRNA-synth-assoc-dom"/>
</dbReference>
<dbReference type="NCBIfam" id="NF006625">
    <property type="entry name" value="PRK09194.1"/>
    <property type="match status" value="1"/>
</dbReference>
<dbReference type="NCBIfam" id="TIGR00409">
    <property type="entry name" value="proS_fam_II"/>
    <property type="match status" value="2"/>
</dbReference>
<dbReference type="PANTHER" id="PTHR42753">
    <property type="entry name" value="MITOCHONDRIAL RIBOSOME PROTEIN L39/PROLYL-TRNA LIGASE FAMILY MEMBER"/>
    <property type="match status" value="1"/>
</dbReference>
<dbReference type="PANTHER" id="PTHR42753:SF2">
    <property type="entry name" value="PROLINE--TRNA LIGASE"/>
    <property type="match status" value="1"/>
</dbReference>
<dbReference type="Pfam" id="PF03129">
    <property type="entry name" value="HGTP_anticodon"/>
    <property type="match status" value="1"/>
</dbReference>
<dbReference type="Pfam" id="PF00587">
    <property type="entry name" value="tRNA-synt_2b"/>
    <property type="match status" value="1"/>
</dbReference>
<dbReference type="Pfam" id="PF04073">
    <property type="entry name" value="tRNA_edit"/>
    <property type="match status" value="1"/>
</dbReference>
<dbReference type="PRINTS" id="PR01046">
    <property type="entry name" value="TRNASYNTHPRO"/>
</dbReference>
<dbReference type="SUPFAM" id="SSF52954">
    <property type="entry name" value="Class II aaRS ABD-related"/>
    <property type="match status" value="1"/>
</dbReference>
<dbReference type="SUPFAM" id="SSF55681">
    <property type="entry name" value="Class II aaRS and biotin synthetases"/>
    <property type="match status" value="1"/>
</dbReference>
<dbReference type="SUPFAM" id="SSF55826">
    <property type="entry name" value="YbaK/ProRS associated domain"/>
    <property type="match status" value="1"/>
</dbReference>
<dbReference type="PROSITE" id="PS50862">
    <property type="entry name" value="AA_TRNA_LIGASE_II"/>
    <property type="match status" value="1"/>
</dbReference>
<evidence type="ECO:0000255" key="1">
    <source>
        <dbReference type="HAMAP-Rule" id="MF_01569"/>
    </source>
</evidence>
<organism>
    <name type="scientific">Streptococcus sanguinis (strain SK36)</name>
    <dbReference type="NCBI Taxonomy" id="388919"/>
    <lineage>
        <taxon>Bacteria</taxon>
        <taxon>Bacillati</taxon>
        <taxon>Bacillota</taxon>
        <taxon>Bacilli</taxon>
        <taxon>Lactobacillales</taxon>
        <taxon>Streptococcaceae</taxon>
        <taxon>Streptococcus</taxon>
    </lineage>
</organism>
<name>SYP_STRSV</name>